<gene>
    <name evidence="1" type="primary">ilvD</name>
    <name type="ordered locus">BWG_3456</name>
</gene>
<feature type="chain" id="PRO_1000201775" description="Dihydroxy-acid dehydratase">
    <location>
        <begin position="1"/>
        <end position="616"/>
    </location>
</feature>
<feature type="active site" description="Proton acceptor" evidence="1">
    <location>
        <position position="517"/>
    </location>
</feature>
<feature type="binding site" evidence="1">
    <location>
        <position position="81"/>
    </location>
    <ligand>
        <name>Mg(2+)</name>
        <dbReference type="ChEBI" id="CHEBI:18420"/>
    </ligand>
</feature>
<feature type="binding site" evidence="1">
    <location>
        <position position="122"/>
    </location>
    <ligand>
        <name>[2Fe-2S] cluster</name>
        <dbReference type="ChEBI" id="CHEBI:190135"/>
    </ligand>
</feature>
<feature type="binding site" evidence="1">
    <location>
        <position position="123"/>
    </location>
    <ligand>
        <name>Mg(2+)</name>
        <dbReference type="ChEBI" id="CHEBI:18420"/>
    </ligand>
</feature>
<feature type="binding site" description="via carbamate group" evidence="1">
    <location>
        <position position="124"/>
    </location>
    <ligand>
        <name>Mg(2+)</name>
        <dbReference type="ChEBI" id="CHEBI:18420"/>
    </ligand>
</feature>
<feature type="binding site" evidence="1">
    <location>
        <position position="195"/>
    </location>
    <ligand>
        <name>[2Fe-2S] cluster</name>
        <dbReference type="ChEBI" id="CHEBI:190135"/>
    </ligand>
</feature>
<feature type="binding site" evidence="1">
    <location>
        <position position="491"/>
    </location>
    <ligand>
        <name>Mg(2+)</name>
        <dbReference type="ChEBI" id="CHEBI:18420"/>
    </ligand>
</feature>
<feature type="modified residue" description="N6-carboxylysine" evidence="1">
    <location>
        <position position="124"/>
    </location>
</feature>
<sequence>MPKYRSATTTHGRNMAGARALWRATGMTDADFGKPIIAVVNSFTQFVPGHVHLRDLGKLVAEQIEAAGGVAKEFNTIAVDDGIAMGHGGMLYSLPSRELIADSVEYMVNAHCADAMVCISNCDKITPGMLMASLRLNIPVIFVSGGPMEAGKTKLSDQIIKLDLVDAMIQGADPKVSDSQSDQVERSACPTCGSCSGMFTANSMNCLTEALGLSQPGNGSLLATHADRKQLFLNAGKRIVELTKRYYEQNDESALPRNIASKAAFENAMTLDIAMGGSTNTVLHLLAAAQEAEIDFTMSDIDKLSRKVPQLCKVAPSTQKYHMEDVHRAGGVIGILGELDRAGLLNRDVKNVLGLTLPQTLEQYDVMLTQDDAVKNMFRAGPAGIRTTQAFSQDCRWDTLDDDRANGCIRSLEHAYSKDGGLAVLYGNFAENGCIVKTAGVDDSILKFTGPAKVYESQDDAVEAILGGKVVAGDVVVIRYEGPKGGPGMQEMLYPTSFLKSMGLGKACALITDGRFSGGTSGLSIGHVSPEAASGGSIGLIEDGDLIAIDIPNRGIQLQVSDAELAARREAQDARGDKAWTPKNRERQVSFALRAYASLATSADKGAVRDKSKLGG</sequence>
<evidence type="ECO:0000255" key="1">
    <source>
        <dbReference type="HAMAP-Rule" id="MF_00012"/>
    </source>
</evidence>
<reference key="1">
    <citation type="journal article" date="2009" name="J. Bacteriol.">
        <title>Genomic sequencing reveals regulatory mutations and recombinational events in the widely used MC4100 lineage of Escherichia coli K-12.</title>
        <authorList>
            <person name="Ferenci T."/>
            <person name="Zhou Z."/>
            <person name="Betteridge T."/>
            <person name="Ren Y."/>
            <person name="Liu Y."/>
            <person name="Feng L."/>
            <person name="Reeves P.R."/>
            <person name="Wang L."/>
        </authorList>
    </citation>
    <scope>NUCLEOTIDE SEQUENCE [LARGE SCALE GENOMIC DNA]</scope>
    <source>
        <strain>K12 / MC4100 / BW2952</strain>
    </source>
</reference>
<proteinExistence type="inferred from homology"/>
<protein>
    <recommendedName>
        <fullName evidence="1">Dihydroxy-acid dehydratase</fullName>
        <shortName evidence="1">DAD</shortName>
        <ecNumber evidence="1">4.2.1.9</ecNumber>
    </recommendedName>
</protein>
<comment type="function">
    <text evidence="1">Functions in the biosynthesis of branched-chain amino acids. Catalyzes the dehydration of (2R,3R)-2,3-dihydroxy-3-methylpentanoate (2,3-dihydroxy-3-methylvalerate) into 2-oxo-3-methylpentanoate (2-oxo-3-methylvalerate) and of (2R)-2,3-dihydroxy-3-methylbutanoate (2,3-dihydroxyisovalerate) into 2-oxo-3-methylbutanoate (2-oxoisovalerate), the penultimate precursor to L-isoleucine and L-valine, respectively.</text>
</comment>
<comment type="catalytic activity">
    <reaction evidence="1">
        <text>(2R)-2,3-dihydroxy-3-methylbutanoate = 3-methyl-2-oxobutanoate + H2O</text>
        <dbReference type="Rhea" id="RHEA:24809"/>
        <dbReference type="ChEBI" id="CHEBI:11851"/>
        <dbReference type="ChEBI" id="CHEBI:15377"/>
        <dbReference type="ChEBI" id="CHEBI:49072"/>
        <dbReference type="EC" id="4.2.1.9"/>
    </reaction>
    <physiologicalReaction direction="left-to-right" evidence="1">
        <dbReference type="Rhea" id="RHEA:24810"/>
    </physiologicalReaction>
</comment>
<comment type="catalytic activity">
    <reaction evidence="1">
        <text>(2R,3R)-2,3-dihydroxy-3-methylpentanoate = (S)-3-methyl-2-oxopentanoate + H2O</text>
        <dbReference type="Rhea" id="RHEA:27694"/>
        <dbReference type="ChEBI" id="CHEBI:15377"/>
        <dbReference type="ChEBI" id="CHEBI:35146"/>
        <dbReference type="ChEBI" id="CHEBI:49258"/>
        <dbReference type="EC" id="4.2.1.9"/>
    </reaction>
    <physiologicalReaction direction="left-to-right" evidence="1">
        <dbReference type="Rhea" id="RHEA:27695"/>
    </physiologicalReaction>
</comment>
<comment type="cofactor">
    <cofactor evidence="1">
        <name>[2Fe-2S] cluster</name>
        <dbReference type="ChEBI" id="CHEBI:190135"/>
    </cofactor>
    <text evidence="1">Binds 1 [2Fe-2S] cluster per subunit. This cluster acts as a Lewis acid cofactor.</text>
</comment>
<comment type="cofactor">
    <cofactor evidence="1">
        <name>Mg(2+)</name>
        <dbReference type="ChEBI" id="CHEBI:18420"/>
    </cofactor>
</comment>
<comment type="pathway">
    <text evidence="1">Amino-acid biosynthesis; L-isoleucine biosynthesis; L-isoleucine from 2-oxobutanoate: step 3/4.</text>
</comment>
<comment type="pathway">
    <text evidence="1">Amino-acid biosynthesis; L-valine biosynthesis; L-valine from pyruvate: step 3/4.</text>
</comment>
<comment type="subunit">
    <text evidence="1">Homodimer.</text>
</comment>
<comment type="similarity">
    <text evidence="1">Belongs to the IlvD/Edd family.</text>
</comment>
<dbReference type="EC" id="4.2.1.9" evidence="1"/>
<dbReference type="EMBL" id="CP001396">
    <property type="protein sequence ID" value="ACR62768.1"/>
    <property type="molecule type" value="Genomic_DNA"/>
</dbReference>
<dbReference type="RefSeq" id="WP_001127399.1">
    <property type="nucleotide sequence ID" value="NC_012759.1"/>
</dbReference>
<dbReference type="SMR" id="C4ZZ41"/>
<dbReference type="KEGG" id="ebw:BWG_3456"/>
<dbReference type="HOGENOM" id="CLU_014271_4_2_6"/>
<dbReference type="UniPathway" id="UPA00047">
    <property type="reaction ID" value="UER00057"/>
</dbReference>
<dbReference type="UniPathway" id="UPA00049">
    <property type="reaction ID" value="UER00061"/>
</dbReference>
<dbReference type="GO" id="GO:0005829">
    <property type="term" value="C:cytosol"/>
    <property type="evidence" value="ECO:0007669"/>
    <property type="project" value="TreeGrafter"/>
</dbReference>
<dbReference type="GO" id="GO:0051537">
    <property type="term" value="F:2 iron, 2 sulfur cluster binding"/>
    <property type="evidence" value="ECO:0007669"/>
    <property type="project" value="UniProtKB-UniRule"/>
</dbReference>
<dbReference type="GO" id="GO:0004160">
    <property type="term" value="F:dihydroxy-acid dehydratase activity"/>
    <property type="evidence" value="ECO:0007669"/>
    <property type="project" value="UniProtKB-UniRule"/>
</dbReference>
<dbReference type="GO" id="GO:0000287">
    <property type="term" value="F:magnesium ion binding"/>
    <property type="evidence" value="ECO:0007669"/>
    <property type="project" value="UniProtKB-UniRule"/>
</dbReference>
<dbReference type="GO" id="GO:0009097">
    <property type="term" value="P:isoleucine biosynthetic process"/>
    <property type="evidence" value="ECO:0007669"/>
    <property type="project" value="UniProtKB-UniRule"/>
</dbReference>
<dbReference type="GO" id="GO:0009099">
    <property type="term" value="P:L-valine biosynthetic process"/>
    <property type="evidence" value="ECO:0007669"/>
    <property type="project" value="UniProtKB-UniRule"/>
</dbReference>
<dbReference type="FunFam" id="3.50.30.80:FF:000001">
    <property type="entry name" value="Dihydroxy-acid dehydratase"/>
    <property type="match status" value="1"/>
</dbReference>
<dbReference type="Gene3D" id="3.50.30.80">
    <property type="entry name" value="IlvD/EDD C-terminal domain-like"/>
    <property type="match status" value="1"/>
</dbReference>
<dbReference type="HAMAP" id="MF_00012">
    <property type="entry name" value="IlvD"/>
    <property type="match status" value="1"/>
</dbReference>
<dbReference type="InterPro" id="IPR042096">
    <property type="entry name" value="Dihydro-acid_dehy_C"/>
</dbReference>
<dbReference type="InterPro" id="IPR004404">
    <property type="entry name" value="DihydroxyA_deHydtase"/>
</dbReference>
<dbReference type="InterPro" id="IPR020558">
    <property type="entry name" value="DiOHA_6PGluconate_deHydtase_CS"/>
</dbReference>
<dbReference type="InterPro" id="IPR056740">
    <property type="entry name" value="ILV_EDD_C"/>
</dbReference>
<dbReference type="InterPro" id="IPR000581">
    <property type="entry name" value="ILV_EDD_N"/>
</dbReference>
<dbReference type="InterPro" id="IPR037237">
    <property type="entry name" value="IlvD/EDD_N"/>
</dbReference>
<dbReference type="NCBIfam" id="TIGR00110">
    <property type="entry name" value="ilvD"/>
    <property type="match status" value="1"/>
</dbReference>
<dbReference type="NCBIfam" id="NF009103">
    <property type="entry name" value="PRK12448.1"/>
    <property type="match status" value="1"/>
</dbReference>
<dbReference type="PANTHER" id="PTHR43661">
    <property type="entry name" value="D-XYLONATE DEHYDRATASE"/>
    <property type="match status" value="1"/>
</dbReference>
<dbReference type="PANTHER" id="PTHR43661:SF3">
    <property type="entry name" value="D-XYLONATE DEHYDRATASE YAGF-RELATED"/>
    <property type="match status" value="1"/>
</dbReference>
<dbReference type="Pfam" id="PF24877">
    <property type="entry name" value="ILV_EDD_C"/>
    <property type="match status" value="1"/>
</dbReference>
<dbReference type="Pfam" id="PF00920">
    <property type="entry name" value="ILVD_EDD_N"/>
    <property type="match status" value="1"/>
</dbReference>
<dbReference type="SUPFAM" id="SSF143975">
    <property type="entry name" value="IlvD/EDD N-terminal domain-like"/>
    <property type="match status" value="1"/>
</dbReference>
<dbReference type="SUPFAM" id="SSF52016">
    <property type="entry name" value="LeuD/IlvD-like"/>
    <property type="match status" value="1"/>
</dbReference>
<dbReference type="PROSITE" id="PS00886">
    <property type="entry name" value="ILVD_EDD_1"/>
    <property type="match status" value="1"/>
</dbReference>
<dbReference type="PROSITE" id="PS00887">
    <property type="entry name" value="ILVD_EDD_2"/>
    <property type="match status" value="1"/>
</dbReference>
<organism>
    <name type="scientific">Escherichia coli (strain K12 / MC4100 / BW2952)</name>
    <dbReference type="NCBI Taxonomy" id="595496"/>
    <lineage>
        <taxon>Bacteria</taxon>
        <taxon>Pseudomonadati</taxon>
        <taxon>Pseudomonadota</taxon>
        <taxon>Gammaproteobacteria</taxon>
        <taxon>Enterobacterales</taxon>
        <taxon>Enterobacteriaceae</taxon>
        <taxon>Escherichia</taxon>
    </lineage>
</organism>
<accession>C4ZZ41</accession>
<name>ILVD_ECOBW</name>
<keyword id="KW-0001">2Fe-2S</keyword>
<keyword id="KW-0028">Amino-acid biosynthesis</keyword>
<keyword id="KW-0100">Branched-chain amino acid biosynthesis</keyword>
<keyword id="KW-0408">Iron</keyword>
<keyword id="KW-0411">Iron-sulfur</keyword>
<keyword id="KW-0456">Lyase</keyword>
<keyword id="KW-0460">Magnesium</keyword>
<keyword id="KW-0479">Metal-binding</keyword>